<gene>
    <name evidence="1" type="primary">aroB</name>
    <name type="ordered locus">AFE_0733</name>
</gene>
<organism>
    <name type="scientific">Acidithiobacillus ferrooxidans (strain ATCC 23270 / DSM 14882 / CIP 104768 / NCIMB 8455)</name>
    <name type="common">Ferrobacillus ferrooxidans (strain ATCC 23270)</name>
    <dbReference type="NCBI Taxonomy" id="243159"/>
    <lineage>
        <taxon>Bacteria</taxon>
        <taxon>Pseudomonadati</taxon>
        <taxon>Pseudomonadota</taxon>
        <taxon>Acidithiobacillia</taxon>
        <taxon>Acidithiobacillales</taxon>
        <taxon>Acidithiobacillaceae</taxon>
        <taxon>Acidithiobacillus</taxon>
    </lineage>
</organism>
<sequence length="364" mass="38695">MRSLCVDLGQRSYPIHTGTGILADSALFAPALSKGPVAVVTDSNVAPLYLETLQKTLKALDKPSLSIILPAGEESKSLDNIQEIAGRLLSAGYGRDCTLCALGGGVVGDITGFAAAVYQRGVAYIQVPTTLLAMVDSSVGGKTGVNHPLGKNMIGAFYQPQAVIADTDTLDSLPEREFRSGLAEVIKYGLINDQGFFSWLEDHMDAVLAREPDALTKVIRHSCKDKADIVARDELEGGLRAILNLGHTFGHAIEAATGYGQYLHGEAVAIGMVMAADLSRRLDLIRESEQDRIYALVEATGLPTLAPALPVADYLGFMRVDKKAEGGRVRFILLRGIGSAVITGEVPPAAITQTLQAFMEHGHA</sequence>
<feature type="chain" id="PRO_1000117470" description="3-dehydroquinate synthase">
    <location>
        <begin position="1"/>
        <end position="364"/>
    </location>
</feature>
<feature type="binding site" evidence="1">
    <location>
        <begin position="105"/>
        <end position="109"/>
    </location>
    <ligand>
        <name>NAD(+)</name>
        <dbReference type="ChEBI" id="CHEBI:57540"/>
    </ligand>
</feature>
<feature type="binding site" evidence="1">
    <location>
        <begin position="129"/>
        <end position="130"/>
    </location>
    <ligand>
        <name>NAD(+)</name>
        <dbReference type="ChEBI" id="CHEBI:57540"/>
    </ligand>
</feature>
<feature type="binding site" evidence="1">
    <location>
        <position position="142"/>
    </location>
    <ligand>
        <name>NAD(+)</name>
        <dbReference type="ChEBI" id="CHEBI:57540"/>
    </ligand>
</feature>
<feature type="binding site" evidence="1">
    <location>
        <position position="151"/>
    </location>
    <ligand>
        <name>NAD(+)</name>
        <dbReference type="ChEBI" id="CHEBI:57540"/>
    </ligand>
</feature>
<feature type="binding site" evidence="1">
    <location>
        <position position="184"/>
    </location>
    <ligand>
        <name>Zn(2+)</name>
        <dbReference type="ChEBI" id="CHEBI:29105"/>
    </ligand>
</feature>
<feature type="binding site" evidence="1">
    <location>
        <position position="247"/>
    </location>
    <ligand>
        <name>Zn(2+)</name>
        <dbReference type="ChEBI" id="CHEBI:29105"/>
    </ligand>
</feature>
<feature type="binding site" evidence="1">
    <location>
        <position position="264"/>
    </location>
    <ligand>
        <name>Zn(2+)</name>
        <dbReference type="ChEBI" id="CHEBI:29105"/>
    </ligand>
</feature>
<reference key="1">
    <citation type="journal article" date="2008" name="BMC Genomics">
        <title>Acidithiobacillus ferrooxidans metabolism: from genome sequence to industrial applications.</title>
        <authorList>
            <person name="Valdes J."/>
            <person name="Pedroso I."/>
            <person name="Quatrini R."/>
            <person name="Dodson R.J."/>
            <person name="Tettelin H."/>
            <person name="Blake R. II"/>
            <person name="Eisen J.A."/>
            <person name="Holmes D.S."/>
        </authorList>
    </citation>
    <scope>NUCLEOTIDE SEQUENCE [LARGE SCALE GENOMIC DNA]</scope>
    <source>
        <strain>ATCC 23270 / DSM 14882 / CIP 104768 / NCIMB 8455</strain>
    </source>
</reference>
<dbReference type="EC" id="4.2.3.4" evidence="1"/>
<dbReference type="EMBL" id="CP001219">
    <property type="protein sequence ID" value="ACK78438.1"/>
    <property type="molecule type" value="Genomic_DNA"/>
</dbReference>
<dbReference type="RefSeq" id="WP_012536317.1">
    <property type="nucleotide sequence ID" value="NC_011761.1"/>
</dbReference>
<dbReference type="SMR" id="B7J629"/>
<dbReference type="STRING" id="243159.AFE_0733"/>
<dbReference type="PaxDb" id="243159-AFE_0733"/>
<dbReference type="GeneID" id="65280080"/>
<dbReference type="KEGG" id="afr:AFE_0733"/>
<dbReference type="eggNOG" id="COG0337">
    <property type="taxonomic scope" value="Bacteria"/>
</dbReference>
<dbReference type="HOGENOM" id="CLU_001201_0_2_6"/>
<dbReference type="UniPathway" id="UPA00053">
    <property type="reaction ID" value="UER00085"/>
</dbReference>
<dbReference type="Proteomes" id="UP000001362">
    <property type="component" value="Chromosome"/>
</dbReference>
<dbReference type="GO" id="GO:0005737">
    <property type="term" value="C:cytoplasm"/>
    <property type="evidence" value="ECO:0007669"/>
    <property type="project" value="UniProtKB-SubCell"/>
</dbReference>
<dbReference type="GO" id="GO:0003856">
    <property type="term" value="F:3-dehydroquinate synthase activity"/>
    <property type="evidence" value="ECO:0007669"/>
    <property type="project" value="UniProtKB-UniRule"/>
</dbReference>
<dbReference type="GO" id="GO:0046872">
    <property type="term" value="F:metal ion binding"/>
    <property type="evidence" value="ECO:0007669"/>
    <property type="project" value="UniProtKB-KW"/>
</dbReference>
<dbReference type="GO" id="GO:0000166">
    <property type="term" value="F:nucleotide binding"/>
    <property type="evidence" value="ECO:0007669"/>
    <property type="project" value="UniProtKB-KW"/>
</dbReference>
<dbReference type="GO" id="GO:0008652">
    <property type="term" value="P:amino acid biosynthetic process"/>
    <property type="evidence" value="ECO:0007669"/>
    <property type="project" value="UniProtKB-KW"/>
</dbReference>
<dbReference type="GO" id="GO:0009073">
    <property type="term" value="P:aromatic amino acid family biosynthetic process"/>
    <property type="evidence" value="ECO:0007669"/>
    <property type="project" value="UniProtKB-KW"/>
</dbReference>
<dbReference type="GO" id="GO:0009423">
    <property type="term" value="P:chorismate biosynthetic process"/>
    <property type="evidence" value="ECO:0007669"/>
    <property type="project" value="UniProtKB-UniRule"/>
</dbReference>
<dbReference type="CDD" id="cd08195">
    <property type="entry name" value="DHQS"/>
    <property type="match status" value="1"/>
</dbReference>
<dbReference type="FunFam" id="3.40.50.1970:FF:000001">
    <property type="entry name" value="3-dehydroquinate synthase"/>
    <property type="match status" value="1"/>
</dbReference>
<dbReference type="Gene3D" id="3.40.50.1970">
    <property type="match status" value="1"/>
</dbReference>
<dbReference type="Gene3D" id="1.20.1090.10">
    <property type="entry name" value="Dehydroquinate synthase-like - alpha domain"/>
    <property type="match status" value="1"/>
</dbReference>
<dbReference type="HAMAP" id="MF_00110">
    <property type="entry name" value="DHQ_synthase"/>
    <property type="match status" value="1"/>
</dbReference>
<dbReference type="InterPro" id="IPR050071">
    <property type="entry name" value="Dehydroquinate_synthase"/>
</dbReference>
<dbReference type="InterPro" id="IPR016037">
    <property type="entry name" value="DHQ_synth_AroB"/>
</dbReference>
<dbReference type="InterPro" id="IPR030963">
    <property type="entry name" value="DHQ_synth_fam"/>
</dbReference>
<dbReference type="InterPro" id="IPR030960">
    <property type="entry name" value="DHQS/DOIS_N"/>
</dbReference>
<dbReference type="InterPro" id="IPR056179">
    <property type="entry name" value="DHQS_C"/>
</dbReference>
<dbReference type="NCBIfam" id="TIGR01357">
    <property type="entry name" value="aroB"/>
    <property type="match status" value="1"/>
</dbReference>
<dbReference type="PANTHER" id="PTHR43622">
    <property type="entry name" value="3-DEHYDROQUINATE SYNTHASE"/>
    <property type="match status" value="1"/>
</dbReference>
<dbReference type="PANTHER" id="PTHR43622:SF7">
    <property type="entry name" value="3-DEHYDROQUINATE SYNTHASE, CHLOROPLASTIC"/>
    <property type="match status" value="1"/>
</dbReference>
<dbReference type="Pfam" id="PF01761">
    <property type="entry name" value="DHQ_synthase"/>
    <property type="match status" value="1"/>
</dbReference>
<dbReference type="Pfam" id="PF24621">
    <property type="entry name" value="DHQS_C"/>
    <property type="match status" value="1"/>
</dbReference>
<dbReference type="PIRSF" id="PIRSF001455">
    <property type="entry name" value="DHQ_synth"/>
    <property type="match status" value="1"/>
</dbReference>
<dbReference type="SUPFAM" id="SSF56796">
    <property type="entry name" value="Dehydroquinate synthase-like"/>
    <property type="match status" value="1"/>
</dbReference>
<comment type="function">
    <text evidence="1">Catalyzes the conversion of 3-deoxy-D-arabino-heptulosonate 7-phosphate (DAHP) to dehydroquinate (DHQ).</text>
</comment>
<comment type="catalytic activity">
    <reaction evidence="1">
        <text>7-phospho-2-dehydro-3-deoxy-D-arabino-heptonate = 3-dehydroquinate + phosphate</text>
        <dbReference type="Rhea" id="RHEA:21968"/>
        <dbReference type="ChEBI" id="CHEBI:32364"/>
        <dbReference type="ChEBI" id="CHEBI:43474"/>
        <dbReference type="ChEBI" id="CHEBI:58394"/>
        <dbReference type="EC" id="4.2.3.4"/>
    </reaction>
</comment>
<comment type="cofactor">
    <cofactor evidence="1">
        <name>Co(2+)</name>
        <dbReference type="ChEBI" id="CHEBI:48828"/>
    </cofactor>
    <cofactor evidence="1">
        <name>Zn(2+)</name>
        <dbReference type="ChEBI" id="CHEBI:29105"/>
    </cofactor>
    <text evidence="1">Binds 1 divalent metal cation per subunit. Can use either Co(2+) or Zn(2+).</text>
</comment>
<comment type="cofactor">
    <cofactor evidence="1">
        <name>NAD(+)</name>
        <dbReference type="ChEBI" id="CHEBI:57540"/>
    </cofactor>
</comment>
<comment type="pathway">
    <text evidence="1">Metabolic intermediate biosynthesis; chorismate biosynthesis; chorismate from D-erythrose 4-phosphate and phosphoenolpyruvate: step 2/7.</text>
</comment>
<comment type="subcellular location">
    <subcellularLocation>
        <location evidence="1">Cytoplasm</location>
    </subcellularLocation>
</comment>
<comment type="similarity">
    <text evidence="1">Belongs to the sugar phosphate cyclases superfamily. Dehydroquinate synthase family.</text>
</comment>
<accession>B7J629</accession>
<evidence type="ECO:0000255" key="1">
    <source>
        <dbReference type="HAMAP-Rule" id="MF_00110"/>
    </source>
</evidence>
<protein>
    <recommendedName>
        <fullName evidence="1">3-dehydroquinate synthase</fullName>
        <shortName evidence="1">DHQS</shortName>
        <ecNumber evidence="1">4.2.3.4</ecNumber>
    </recommendedName>
</protein>
<keyword id="KW-0028">Amino-acid biosynthesis</keyword>
<keyword id="KW-0057">Aromatic amino acid biosynthesis</keyword>
<keyword id="KW-0170">Cobalt</keyword>
<keyword id="KW-0963">Cytoplasm</keyword>
<keyword id="KW-0456">Lyase</keyword>
<keyword id="KW-0479">Metal-binding</keyword>
<keyword id="KW-0520">NAD</keyword>
<keyword id="KW-0547">Nucleotide-binding</keyword>
<keyword id="KW-1185">Reference proteome</keyword>
<keyword id="KW-0862">Zinc</keyword>
<name>AROB_ACIF2</name>
<proteinExistence type="inferred from homology"/>